<accession>Q7ZTA7</accession>
<protein>
    <recommendedName>
        <fullName evidence="8">Acidic phospholipase A2 CoaPLA2</fullName>
        <shortName>svPLA2</shortName>
        <ecNumber>3.1.1.4</ecNumber>
    </recommendedName>
    <alternativeName>
        <fullName evidence="7">Cvv-E6d</fullName>
    </alternativeName>
    <alternativeName>
        <fullName>Phosphatidylcholine 2-acylhydrolase</fullName>
    </alternativeName>
    <alternativeName>
        <fullName evidence="9">Phospholipase A2 CoaTx-I</fullName>
    </alternativeName>
</protein>
<name>PA2AD_CROLY</name>
<keyword id="KW-0106">Calcium</keyword>
<keyword id="KW-0903">Direct protein sequencing</keyword>
<keyword id="KW-1015">Disulfide bond</keyword>
<keyword id="KW-1199">Hemostasis impairing toxin</keyword>
<keyword id="KW-0378">Hydrolase</keyword>
<keyword id="KW-0442">Lipid degradation</keyword>
<keyword id="KW-0443">Lipid metabolism</keyword>
<keyword id="KW-0479">Metal-binding</keyword>
<keyword id="KW-0959">Myotoxin</keyword>
<keyword id="KW-1201">Platelet aggregation inhibiting toxin</keyword>
<keyword id="KW-0964">Secreted</keyword>
<keyword id="KW-0732">Signal</keyword>
<keyword id="KW-0800">Toxin</keyword>
<dbReference type="EC" id="3.1.1.4"/>
<dbReference type="EMBL" id="AY120876">
    <property type="protein sequence ID" value="AAM80564.1"/>
    <property type="molecule type" value="mRNA"/>
</dbReference>
<dbReference type="SMR" id="Q7ZTA7"/>
<dbReference type="GO" id="GO:0005576">
    <property type="term" value="C:extracellular region"/>
    <property type="evidence" value="ECO:0007669"/>
    <property type="project" value="UniProtKB-SubCell"/>
</dbReference>
<dbReference type="GO" id="GO:0005509">
    <property type="term" value="F:calcium ion binding"/>
    <property type="evidence" value="ECO:0007669"/>
    <property type="project" value="InterPro"/>
</dbReference>
<dbReference type="GO" id="GO:0047498">
    <property type="term" value="F:calcium-dependent phospholipase A2 activity"/>
    <property type="evidence" value="ECO:0007669"/>
    <property type="project" value="TreeGrafter"/>
</dbReference>
<dbReference type="GO" id="GO:0005543">
    <property type="term" value="F:phospholipid binding"/>
    <property type="evidence" value="ECO:0007669"/>
    <property type="project" value="TreeGrafter"/>
</dbReference>
<dbReference type="GO" id="GO:0090729">
    <property type="term" value="F:toxin activity"/>
    <property type="evidence" value="ECO:0007669"/>
    <property type="project" value="UniProtKB-KW"/>
</dbReference>
<dbReference type="GO" id="GO:0050482">
    <property type="term" value="P:arachidonate secretion"/>
    <property type="evidence" value="ECO:0007669"/>
    <property type="project" value="InterPro"/>
</dbReference>
<dbReference type="GO" id="GO:0016042">
    <property type="term" value="P:lipid catabolic process"/>
    <property type="evidence" value="ECO:0007669"/>
    <property type="project" value="UniProtKB-KW"/>
</dbReference>
<dbReference type="GO" id="GO:0042130">
    <property type="term" value="P:negative regulation of T cell proliferation"/>
    <property type="evidence" value="ECO:0007669"/>
    <property type="project" value="TreeGrafter"/>
</dbReference>
<dbReference type="GO" id="GO:0006644">
    <property type="term" value="P:phospholipid metabolic process"/>
    <property type="evidence" value="ECO:0007669"/>
    <property type="project" value="InterPro"/>
</dbReference>
<dbReference type="CDD" id="cd00125">
    <property type="entry name" value="PLA2c"/>
    <property type="match status" value="1"/>
</dbReference>
<dbReference type="FunFam" id="1.20.90.10:FF:000001">
    <property type="entry name" value="Basic phospholipase A2 homolog"/>
    <property type="match status" value="1"/>
</dbReference>
<dbReference type="Gene3D" id="1.20.90.10">
    <property type="entry name" value="Phospholipase A2 domain"/>
    <property type="match status" value="1"/>
</dbReference>
<dbReference type="InterPro" id="IPR001211">
    <property type="entry name" value="PLipase_A2"/>
</dbReference>
<dbReference type="InterPro" id="IPR033112">
    <property type="entry name" value="PLipase_A2_Asp_AS"/>
</dbReference>
<dbReference type="InterPro" id="IPR016090">
    <property type="entry name" value="PLipase_A2_dom"/>
</dbReference>
<dbReference type="InterPro" id="IPR036444">
    <property type="entry name" value="PLipase_A2_dom_sf"/>
</dbReference>
<dbReference type="InterPro" id="IPR033113">
    <property type="entry name" value="PLipase_A2_His_AS"/>
</dbReference>
<dbReference type="PANTHER" id="PTHR11716">
    <property type="entry name" value="PHOSPHOLIPASE A2 FAMILY MEMBER"/>
    <property type="match status" value="1"/>
</dbReference>
<dbReference type="PANTHER" id="PTHR11716:SF9">
    <property type="entry name" value="PHOSPHOLIPASE A2, MEMBRANE ASSOCIATED"/>
    <property type="match status" value="1"/>
</dbReference>
<dbReference type="Pfam" id="PF00068">
    <property type="entry name" value="Phospholip_A2_1"/>
    <property type="match status" value="1"/>
</dbReference>
<dbReference type="PRINTS" id="PR00389">
    <property type="entry name" value="PHPHLIPASEA2"/>
</dbReference>
<dbReference type="SMART" id="SM00085">
    <property type="entry name" value="PA2c"/>
    <property type="match status" value="1"/>
</dbReference>
<dbReference type="SUPFAM" id="SSF48619">
    <property type="entry name" value="Phospholipase A2, PLA2"/>
    <property type="match status" value="1"/>
</dbReference>
<dbReference type="PROSITE" id="PS00119">
    <property type="entry name" value="PA2_ASP"/>
    <property type="match status" value="1"/>
</dbReference>
<dbReference type="PROSITE" id="PS00118">
    <property type="entry name" value="PA2_HIS"/>
    <property type="match status" value="1"/>
</dbReference>
<proteinExistence type="evidence at protein level"/>
<evidence type="ECO:0000250" key="1">
    <source>
        <dbReference type="UniProtKB" id="O42187"/>
    </source>
</evidence>
<evidence type="ECO:0000250" key="2">
    <source>
        <dbReference type="UniProtKB" id="P06859"/>
    </source>
</evidence>
<evidence type="ECO:0000255" key="3">
    <source>
        <dbReference type="PROSITE-ProRule" id="PRU10035"/>
    </source>
</evidence>
<evidence type="ECO:0000255" key="4">
    <source>
        <dbReference type="PROSITE-ProRule" id="PRU10036"/>
    </source>
</evidence>
<evidence type="ECO:0000269" key="5">
    <source>
    </source>
</evidence>
<evidence type="ECO:0000269" key="6">
    <source>
    </source>
</evidence>
<evidence type="ECO:0000303" key="7">
    <source>
    </source>
</evidence>
<evidence type="ECO:0000303" key="8">
    <source>
    </source>
</evidence>
<evidence type="ECO:0000303" key="9">
    <source>
    </source>
</evidence>
<evidence type="ECO:0000305" key="10"/>
<evidence type="ECO:0000305" key="11">
    <source>
    </source>
</evidence>
<organism>
    <name type="scientific">Crotalus lutosus abyssus</name>
    <name type="common">Grand Canyon rattlesnake</name>
    <name type="synonym">Crotalus oreganus abyssus</name>
    <dbReference type="NCBI Taxonomy" id="128077"/>
    <lineage>
        <taxon>Eukaryota</taxon>
        <taxon>Metazoa</taxon>
        <taxon>Chordata</taxon>
        <taxon>Craniata</taxon>
        <taxon>Vertebrata</taxon>
        <taxon>Euteleostomi</taxon>
        <taxon>Lepidosauria</taxon>
        <taxon>Squamata</taxon>
        <taxon>Bifurcata</taxon>
        <taxon>Unidentata</taxon>
        <taxon>Episquamata</taxon>
        <taxon>Toxicofera</taxon>
        <taxon>Serpentes</taxon>
        <taxon>Colubroidea</taxon>
        <taxon>Viperidae</taxon>
        <taxon>Crotalinae</taxon>
        <taxon>Crotalus</taxon>
    </lineage>
</organism>
<comment type="function">
    <text evidence="5 6">Snake venom phospholipase A2 (PLA2) that shows very low inhibition of ADP-induced platelet aggregation in platelet-rich plasma of human, rabbit and guinea pig (PubMed:12623078). Shows edema-inducing activity and myotoxicity (PubMed:24707493). PLA2 catalyzes the calcium-dependent hydrolysis of the 2-acyl groups in 3-sn-phosphoglycerides.</text>
</comment>
<comment type="catalytic activity">
    <reaction evidence="3 4 6">
        <text>a 1,2-diacyl-sn-glycero-3-phosphocholine + H2O = a 1-acyl-sn-glycero-3-phosphocholine + a fatty acid + H(+)</text>
        <dbReference type="Rhea" id="RHEA:15801"/>
        <dbReference type="ChEBI" id="CHEBI:15377"/>
        <dbReference type="ChEBI" id="CHEBI:15378"/>
        <dbReference type="ChEBI" id="CHEBI:28868"/>
        <dbReference type="ChEBI" id="CHEBI:57643"/>
        <dbReference type="ChEBI" id="CHEBI:58168"/>
        <dbReference type="EC" id="3.1.1.4"/>
    </reaction>
</comment>
<comment type="cofactor">
    <cofactor evidence="5 6">
        <name>Ca(2+)</name>
        <dbReference type="ChEBI" id="CHEBI:29108"/>
    </cofactor>
</comment>
<comment type="biophysicochemical properties">
    <phDependence>
        <text evidence="6">Optimum pH is 7.9.</text>
    </phDependence>
    <temperatureDependence>
        <text evidence="6">Optimum temperature is 37.3 degrees Celsius.</text>
    </temperatureDependence>
</comment>
<comment type="subunit">
    <text evidence="6">Homodimer.</text>
</comment>
<comment type="subcellular location">
    <subcellularLocation>
        <location evidence="5">Secreted</location>
    </subcellularLocation>
</comment>
<comment type="tissue specificity">
    <text evidence="11">Expressed by the venom gland.</text>
</comment>
<comment type="mass spectrometry">
    <text>Monoisotopic mass.</text>
</comment>
<comment type="mass spectrometry">
    <text>Average mass.</text>
</comment>
<comment type="toxic dose">
    <text evidence="6">LD(50) is 1.8 mg/kg by intravenous injection into mice.</text>
</comment>
<comment type="similarity">
    <text evidence="10">Belongs to the phospholipase A2 family. Group II subfamily. D49 sub-subfamily.</text>
</comment>
<comment type="caution">
    <text evidence="10">PubMed:12623078 presents this protein as coming from C.viridis viridis, whereas PubMed:24707493 concludes it comes from C.oreganus abyssus due to identical sequences, very similar catalytic activity, and geographical origin.</text>
</comment>
<feature type="signal peptide" evidence="5">
    <location>
        <begin position="1"/>
        <end position="16"/>
    </location>
</feature>
<feature type="chain" id="PRO_0000418556" description="Acidic phospholipase A2 CoaPLA2" evidence="11">
    <location>
        <begin position="17"/>
        <end position="138"/>
    </location>
</feature>
<feature type="active site" evidence="2">
    <location>
        <position position="63"/>
    </location>
</feature>
<feature type="active site" evidence="2">
    <location>
        <position position="105"/>
    </location>
</feature>
<feature type="binding site" evidence="1">
    <location>
        <position position="43"/>
    </location>
    <ligand>
        <name>Ca(2+)</name>
        <dbReference type="ChEBI" id="CHEBI:29108"/>
    </ligand>
</feature>
<feature type="binding site" evidence="1">
    <location>
        <position position="45"/>
    </location>
    <ligand>
        <name>Ca(2+)</name>
        <dbReference type="ChEBI" id="CHEBI:29108"/>
    </ligand>
</feature>
<feature type="binding site" evidence="1">
    <location>
        <position position="47"/>
    </location>
    <ligand>
        <name>Ca(2+)</name>
        <dbReference type="ChEBI" id="CHEBI:29108"/>
    </ligand>
</feature>
<feature type="binding site" evidence="1">
    <location>
        <position position="64"/>
    </location>
    <ligand>
        <name>Ca(2+)</name>
        <dbReference type="ChEBI" id="CHEBI:29108"/>
    </ligand>
</feature>
<feature type="disulfide bond" evidence="1">
    <location>
        <begin position="42"/>
        <end position="131"/>
    </location>
</feature>
<feature type="disulfide bond" evidence="1">
    <location>
        <begin position="44"/>
        <end position="60"/>
    </location>
</feature>
<feature type="disulfide bond" evidence="1">
    <location>
        <begin position="59"/>
        <end position="111"/>
    </location>
</feature>
<feature type="disulfide bond" evidence="1">
    <location>
        <begin position="65"/>
        <end position="138"/>
    </location>
</feature>
<feature type="disulfide bond" evidence="1">
    <location>
        <begin position="66"/>
        <end position="104"/>
    </location>
</feature>
<feature type="disulfide bond" evidence="1">
    <location>
        <begin position="73"/>
        <end position="97"/>
    </location>
</feature>
<feature type="disulfide bond" evidence="1">
    <location>
        <begin position="91"/>
        <end position="102"/>
    </location>
</feature>
<reference key="1">
    <citation type="journal article" date="2003" name="Arch. Biochem. Biophys.">
        <title>Geographic variations, cloning, and functional analyses of the venom acidic phospholipases A2 of Crotalus viridis viridis.</title>
        <authorList>
            <person name="Tsai I.-H."/>
            <person name="Wang Y.-M."/>
            <person name="Chen Y.-H."/>
            <person name="Tu A.T."/>
        </authorList>
    </citation>
    <scope>NUCLEOTIDE SEQUENCE [MRNA]</scope>
    <scope>PROTEIN SEQUENCE OF 17-39</scope>
    <scope>FUNCTION</scope>
    <scope>COFACTOR</scope>
    <scope>MASS SPECTROMETRY</scope>
    <scope>SUBCELLULAR LOCATION</scope>
    <source>
        <strain>Southeastern Arizona</strain>
        <tissue>Venom</tissue>
        <tissue>Venom gland</tissue>
    </source>
</reference>
<reference key="2">
    <citation type="journal article" date="2014" name="Biomed. Res. Int.">
        <title>A novel phospholipase A 2 (D49) from the venom of the Crotalus oreganus abyssus (North American Grand Canyon rattlesnake).</title>
        <authorList>
            <person name="Martins W."/>
            <person name="Baldasso P.A."/>
            <person name="Honorio K.M."/>
            <person name="Maltarollo V.G."/>
            <person name="Ribeiro R.I."/>
            <person name="Carvalho B.M."/>
            <person name="Soares A.M."/>
            <person name="Calderon L.A."/>
            <person name="Stabeli R.G."/>
            <person name="Caballol M.A."/>
            <person name="Acosta G."/>
            <person name="Oliveira E."/>
            <person name="Marangoni S."/>
            <person name="Albericio F."/>
            <person name="Da Silva S.L."/>
        </authorList>
    </citation>
    <scope>FUNCTION</scope>
    <scope>CATALYTIC ACTIVITY</scope>
    <scope>COFACTOR</scope>
    <scope>BIOPHYSICOCHEMICAL PROPERTIES</scope>
    <scope>SUBUNIT</scope>
    <scope>MASS SPECTROMETRY</scope>
    <scope>TOXIC DOSE</scope>
    <scope>3D-STRUCTURE MODELING</scope>
    <source>
        <tissue>Venom</tissue>
    </source>
</reference>
<reference key="3">
    <citation type="journal article" date="2016" name="Toxicon">
        <title>CoaTx-II, a new dimeric Lys49 phospholipase A2 from Crotalus oreganus abyssus snake venom with bactericidal potential: insights into its structure and biological roles.</title>
        <authorList>
            <person name="Almeida J.R."/>
            <person name="Lancellotti M."/>
            <person name="Soares A.M."/>
            <person name="Calderon L.A."/>
            <person name="Ramirez D."/>
            <person name="Gonzalez W."/>
            <person name="Marangoni S."/>
            <person name="Da Silva S.L."/>
        </authorList>
    </citation>
    <scope>NOMENCLATURE</scope>
    <scope>FUNCTION</scope>
    <source>
        <tissue>Venom</tissue>
    </source>
</reference>
<sequence>MRTLWIVAVLLLGVEGSLVQFEMLIMKVAKRSGLFSYSAYGCYCGWGGHGRPQDATDHCCFVHDCCYGKVTDCNPKTASYTYSEENGEIVCGGDDPCKKQVCECDRVAAICFRDNIPTYDNKYWRFPPENCQEEPEPC</sequence>